<organism>
    <name type="scientific">Pseudomonas aeruginosa (strain ATCC 15692 / DSM 22644 / CIP 104116 / JCM 14847 / LMG 12228 / 1C / PRS 101 / PAO1)</name>
    <dbReference type="NCBI Taxonomy" id="208964"/>
    <lineage>
        <taxon>Bacteria</taxon>
        <taxon>Pseudomonadati</taxon>
        <taxon>Pseudomonadota</taxon>
        <taxon>Gammaproteobacteria</taxon>
        <taxon>Pseudomonadales</taxon>
        <taxon>Pseudomonadaceae</taxon>
        <taxon>Pseudomonas</taxon>
    </lineage>
</organism>
<reference key="1">
    <citation type="journal article" date="2000" name="Nature">
        <title>Complete genome sequence of Pseudomonas aeruginosa PAO1, an opportunistic pathogen.</title>
        <authorList>
            <person name="Stover C.K."/>
            <person name="Pham X.-Q.T."/>
            <person name="Erwin A.L."/>
            <person name="Mizoguchi S.D."/>
            <person name="Warrener P."/>
            <person name="Hickey M.J."/>
            <person name="Brinkman F.S.L."/>
            <person name="Hufnagle W.O."/>
            <person name="Kowalik D.J."/>
            <person name="Lagrou M."/>
            <person name="Garber R.L."/>
            <person name="Goltry L."/>
            <person name="Tolentino E."/>
            <person name="Westbrock-Wadman S."/>
            <person name="Yuan Y."/>
            <person name="Brody L.L."/>
            <person name="Coulter S.N."/>
            <person name="Folger K.R."/>
            <person name="Kas A."/>
            <person name="Larbig K."/>
            <person name="Lim R.M."/>
            <person name="Smith K.A."/>
            <person name="Spencer D.H."/>
            <person name="Wong G.K.-S."/>
            <person name="Wu Z."/>
            <person name="Paulsen I.T."/>
            <person name="Reizer J."/>
            <person name="Saier M.H. Jr."/>
            <person name="Hancock R.E.W."/>
            <person name="Lory S."/>
            <person name="Olson M.V."/>
        </authorList>
    </citation>
    <scope>NUCLEOTIDE SEQUENCE [LARGE SCALE GENOMIC DNA]</scope>
    <source>
        <strain>ATCC 15692 / DSM 22644 / CIP 104116 / JCM 14847 / LMG 12228 / 1C / PRS 101 / PAO1</strain>
    </source>
</reference>
<comment type="function">
    <text evidence="1">Involved in the aerobic and anaerobic degradation of long-chain fatty acids via beta-oxidation cycle. Catalyzes the formation of 3-oxoacyl-CoA from enoyl-CoA via L-3-hydroxyacyl-CoA. It can also use D-3-hydroxyacyl-CoA and cis-3-enoyl-CoA as substrate.</text>
</comment>
<comment type="catalytic activity">
    <reaction evidence="1">
        <text>a (3S)-3-hydroxyacyl-CoA + NAD(+) = a 3-oxoacyl-CoA + NADH + H(+)</text>
        <dbReference type="Rhea" id="RHEA:22432"/>
        <dbReference type="ChEBI" id="CHEBI:15378"/>
        <dbReference type="ChEBI" id="CHEBI:57318"/>
        <dbReference type="ChEBI" id="CHEBI:57540"/>
        <dbReference type="ChEBI" id="CHEBI:57945"/>
        <dbReference type="ChEBI" id="CHEBI:90726"/>
        <dbReference type="EC" id="1.1.1.35"/>
    </reaction>
</comment>
<comment type="catalytic activity">
    <reaction evidence="1">
        <text>a (3S)-3-hydroxyacyl-CoA = a (2E)-enoyl-CoA + H2O</text>
        <dbReference type="Rhea" id="RHEA:16105"/>
        <dbReference type="ChEBI" id="CHEBI:15377"/>
        <dbReference type="ChEBI" id="CHEBI:57318"/>
        <dbReference type="ChEBI" id="CHEBI:58856"/>
        <dbReference type="EC" id="4.2.1.17"/>
    </reaction>
</comment>
<comment type="catalytic activity">
    <reaction evidence="1">
        <text>a 4-saturated-(3S)-3-hydroxyacyl-CoA = a (3E)-enoyl-CoA + H2O</text>
        <dbReference type="Rhea" id="RHEA:20724"/>
        <dbReference type="ChEBI" id="CHEBI:15377"/>
        <dbReference type="ChEBI" id="CHEBI:58521"/>
        <dbReference type="ChEBI" id="CHEBI:137480"/>
        <dbReference type="EC" id="4.2.1.17"/>
    </reaction>
</comment>
<comment type="catalytic activity">
    <reaction evidence="1">
        <text>(3S)-3-hydroxybutanoyl-CoA = (3R)-3-hydroxybutanoyl-CoA</text>
        <dbReference type="Rhea" id="RHEA:21760"/>
        <dbReference type="ChEBI" id="CHEBI:57315"/>
        <dbReference type="ChEBI" id="CHEBI:57316"/>
        <dbReference type="EC" id="5.1.2.3"/>
    </reaction>
</comment>
<comment type="catalytic activity">
    <reaction evidence="1">
        <text>a (3Z)-enoyl-CoA = a 4-saturated (2E)-enoyl-CoA</text>
        <dbReference type="Rhea" id="RHEA:45900"/>
        <dbReference type="ChEBI" id="CHEBI:85097"/>
        <dbReference type="ChEBI" id="CHEBI:85489"/>
        <dbReference type="EC" id="5.3.3.8"/>
    </reaction>
</comment>
<comment type="catalytic activity">
    <reaction evidence="1">
        <text>a (3E)-enoyl-CoA = a 4-saturated (2E)-enoyl-CoA</text>
        <dbReference type="Rhea" id="RHEA:45228"/>
        <dbReference type="ChEBI" id="CHEBI:58521"/>
        <dbReference type="ChEBI" id="CHEBI:85097"/>
        <dbReference type="EC" id="5.3.3.8"/>
    </reaction>
</comment>
<comment type="pathway">
    <text evidence="1">Lipid metabolism; fatty acid beta-oxidation.</text>
</comment>
<comment type="subunit">
    <text evidence="1">Heterotetramer of two alpha chains (FadB) and two beta chains (FadA).</text>
</comment>
<comment type="similarity">
    <text evidence="1">In the N-terminal section; belongs to the enoyl-CoA hydratase/isomerase family.</text>
</comment>
<comment type="similarity">
    <text evidence="1">In the C-terminal section; belongs to the 3-hydroxyacyl-CoA dehydrogenase family.</text>
</comment>
<sequence length="715" mass="76954">MIYQGKAITVKPLEGGIVELNFDLKGESVNKFNRLTLSELRAAVDAIKADASVKGVIVTSGKDVFIVGADITEFVDNFQLPDEELMAGNLEANKIFSDFEDLDVPTVAAINGIALGGGLEMCLAADFRVMSATAKVGLPEVKLGIYPGFGGTVRLPRLIGCDNAVEWIASGKENKAEDALKVGAVDAVVAPEQLQAAALDLAKRAVAGELDHKARRQPKLEKLKLNAIEQMMAFETAKGFVAGQAGPNYPAPVEAIKSIQKAANFGRDKALEVEAAGFVKLAKTSVAQSLIGLFLNDQELKKKAKKYDEVAKDVKLAAVLGAGIMGGGIAYQSALKGTPILMKDIREEGIQMGLNEAAKLLGKRVEKGRLTPAKMAEALNGIRPTMSYGDFGNVDIVVEAVVENPKVKQAVLAEVEGAVKEDAIIASNTSTISISLLAQALKRPENFCGMHFFNPVHMMPLVEVIRGEKTGETAIATTVAYAKKMGKSPIVVNDCPGFLVNRVLFPYFGGFAKLLSFGVDFVRIDKVMEKFGWPMGPAYLSDVVGIDTGHHGRDVMAEGFPDRMAVEGKTAVDVMYEANRLGQKNGKGFYAYETDKRGKPKKVTDPQAYEVLKPIVVEQREVTDEDIVNFMMIPLCLETVRCLEDGIVETAAEADMGLIYGIGFPPFRGGALRYIDSIGVAEFVALADKYAELGALYHPTAKLREMAKNGQKFFG</sequence>
<evidence type="ECO:0000255" key="1">
    <source>
        <dbReference type="HAMAP-Rule" id="MF_01621"/>
    </source>
</evidence>
<gene>
    <name evidence="1" type="primary">fadB</name>
    <name type="ordered locus">PA3014</name>
</gene>
<proteinExistence type="inferred from homology"/>
<feature type="chain" id="PRO_0000109274" description="Fatty acid oxidation complex subunit alpha">
    <location>
        <begin position="1"/>
        <end position="715"/>
    </location>
</feature>
<feature type="region of interest" description="Enoyl-CoA hydratase/isomerase" evidence="1">
    <location>
        <begin position="1"/>
        <end position="190"/>
    </location>
</feature>
<feature type="region of interest" description="3-hydroxyacyl-CoA dehydrogenase" evidence="1">
    <location>
        <begin position="312"/>
        <end position="715"/>
    </location>
</feature>
<feature type="active site" description="For 3-hydroxyacyl-CoA dehydrogenase activity" evidence="1">
    <location>
        <position position="451"/>
    </location>
</feature>
<feature type="binding site" evidence="1">
    <location>
        <position position="297"/>
    </location>
    <ligand>
        <name>substrate</name>
    </ligand>
</feature>
<feature type="binding site" evidence="1">
    <location>
        <position position="325"/>
    </location>
    <ligand>
        <name>NAD(+)</name>
        <dbReference type="ChEBI" id="CHEBI:57540"/>
    </ligand>
</feature>
<feature type="binding site" evidence="1">
    <location>
        <position position="344"/>
    </location>
    <ligand>
        <name>NAD(+)</name>
        <dbReference type="ChEBI" id="CHEBI:57540"/>
    </ligand>
</feature>
<feature type="binding site" evidence="1">
    <location>
        <begin position="401"/>
        <end position="403"/>
    </location>
    <ligand>
        <name>NAD(+)</name>
        <dbReference type="ChEBI" id="CHEBI:57540"/>
    </ligand>
</feature>
<feature type="binding site" evidence="1">
    <location>
        <position position="408"/>
    </location>
    <ligand>
        <name>NAD(+)</name>
        <dbReference type="ChEBI" id="CHEBI:57540"/>
    </ligand>
</feature>
<feature type="binding site" evidence="1">
    <location>
        <position position="430"/>
    </location>
    <ligand>
        <name>NAD(+)</name>
        <dbReference type="ChEBI" id="CHEBI:57540"/>
    </ligand>
</feature>
<feature type="binding site" evidence="1">
    <location>
        <position position="454"/>
    </location>
    <ligand>
        <name>NAD(+)</name>
        <dbReference type="ChEBI" id="CHEBI:57540"/>
    </ligand>
</feature>
<feature type="binding site" evidence="1">
    <location>
        <position position="501"/>
    </location>
    <ligand>
        <name>substrate</name>
    </ligand>
</feature>
<feature type="binding site" evidence="1">
    <location>
        <position position="660"/>
    </location>
    <ligand>
        <name>substrate</name>
    </ligand>
</feature>
<feature type="site" description="Important for catalytic activity" evidence="1">
    <location>
        <position position="120"/>
    </location>
</feature>
<feature type="site" description="Important for catalytic activity" evidence="1">
    <location>
        <position position="140"/>
    </location>
</feature>
<dbReference type="EC" id="4.2.1.17" evidence="1"/>
<dbReference type="EC" id="5.1.2.3" evidence="1"/>
<dbReference type="EC" id="5.3.3.8" evidence="1"/>
<dbReference type="EC" id="1.1.1.35" evidence="1"/>
<dbReference type="EMBL" id="AE004091">
    <property type="protein sequence ID" value="AAG06402.1"/>
    <property type="molecule type" value="Genomic_DNA"/>
</dbReference>
<dbReference type="PIR" id="G83269">
    <property type="entry name" value="G83269"/>
</dbReference>
<dbReference type="RefSeq" id="WP_003091204.1">
    <property type="nucleotide sequence ID" value="NZ_QZGE01000009.1"/>
</dbReference>
<dbReference type="SMR" id="Q9HZJ2"/>
<dbReference type="FunCoup" id="Q9HZJ2">
    <property type="interactions" value="206"/>
</dbReference>
<dbReference type="STRING" id="208964.PA3014"/>
<dbReference type="PaxDb" id="208964-PA3014"/>
<dbReference type="KEGG" id="pae:PA3014"/>
<dbReference type="PATRIC" id="fig|208964.12.peg.3162"/>
<dbReference type="PseudoCAP" id="PA3014"/>
<dbReference type="HOGENOM" id="CLU_009834_16_3_6"/>
<dbReference type="InParanoid" id="Q9HZJ2"/>
<dbReference type="OrthoDB" id="5389341at2"/>
<dbReference type="PhylomeDB" id="Q9HZJ2"/>
<dbReference type="BioCyc" id="MetaCyc:MONOMER-17591"/>
<dbReference type="BioCyc" id="PAER208964:G1FZ6-3066-MONOMER"/>
<dbReference type="UniPathway" id="UPA00659"/>
<dbReference type="Proteomes" id="UP000002438">
    <property type="component" value="Chromosome"/>
</dbReference>
<dbReference type="GO" id="GO:0036125">
    <property type="term" value="C:fatty acid beta-oxidation multienzyme complex"/>
    <property type="evidence" value="ECO:0007669"/>
    <property type="project" value="InterPro"/>
</dbReference>
<dbReference type="GO" id="GO:0008692">
    <property type="term" value="F:3-hydroxybutyryl-CoA epimerase activity"/>
    <property type="evidence" value="ECO:0007669"/>
    <property type="project" value="UniProtKB-UniRule"/>
</dbReference>
<dbReference type="GO" id="GO:0004165">
    <property type="term" value="F:delta(3)-delta(2)-enoyl-CoA isomerase activity"/>
    <property type="evidence" value="ECO:0007669"/>
    <property type="project" value="UniProtKB-UniRule"/>
</dbReference>
<dbReference type="GO" id="GO:0004300">
    <property type="term" value="F:enoyl-CoA hydratase activity"/>
    <property type="evidence" value="ECO:0000318"/>
    <property type="project" value="GO_Central"/>
</dbReference>
<dbReference type="GO" id="GO:0016509">
    <property type="term" value="F:long-chain-3-hydroxyacyl-CoA dehydrogenase activity"/>
    <property type="evidence" value="ECO:0000318"/>
    <property type="project" value="GO_Central"/>
</dbReference>
<dbReference type="GO" id="GO:0070403">
    <property type="term" value="F:NAD+ binding"/>
    <property type="evidence" value="ECO:0007669"/>
    <property type="project" value="InterPro"/>
</dbReference>
<dbReference type="GO" id="GO:0006635">
    <property type="term" value="P:fatty acid beta-oxidation"/>
    <property type="evidence" value="ECO:0000318"/>
    <property type="project" value="GO_Central"/>
</dbReference>
<dbReference type="CDD" id="cd06558">
    <property type="entry name" value="crotonase-like"/>
    <property type="match status" value="1"/>
</dbReference>
<dbReference type="FunFam" id="1.10.1040.50:FF:000001">
    <property type="entry name" value="Fatty acid oxidation complex subunit alpha"/>
    <property type="match status" value="1"/>
</dbReference>
<dbReference type="FunFam" id="3.90.226.10:FF:000018">
    <property type="entry name" value="Fatty acid oxidation complex subunit alpha"/>
    <property type="match status" value="1"/>
</dbReference>
<dbReference type="FunFam" id="3.40.50.720:FF:000009">
    <property type="entry name" value="Fatty oxidation complex, alpha subunit"/>
    <property type="match status" value="1"/>
</dbReference>
<dbReference type="Gene3D" id="1.10.1040.50">
    <property type="match status" value="1"/>
</dbReference>
<dbReference type="Gene3D" id="3.90.226.10">
    <property type="entry name" value="2-enoyl-CoA Hydratase, Chain A, domain 1"/>
    <property type="match status" value="1"/>
</dbReference>
<dbReference type="Gene3D" id="3.40.50.720">
    <property type="entry name" value="NAD(P)-binding Rossmann-like Domain"/>
    <property type="match status" value="1"/>
</dbReference>
<dbReference type="HAMAP" id="MF_01621">
    <property type="entry name" value="FadB"/>
    <property type="match status" value="1"/>
</dbReference>
<dbReference type="InterPro" id="IPR006180">
    <property type="entry name" value="3-OHacyl-CoA_DH_CS"/>
</dbReference>
<dbReference type="InterPro" id="IPR006176">
    <property type="entry name" value="3-OHacyl-CoA_DH_NAD-bd"/>
</dbReference>
<dbReference type="InterPro" id="IPR006108">
    <property type="entry name" value="3HC_DH_C"/>
</dbReference>
<dbReference type="InterPro" id="IPR008927">
    <property type="entry name" value="6-PGluconate_DH-like_C_sf"/>
</dbReference>
<dbReference type="InterPro" id="IPR029045">
    <property type="entry name" value="ClpP/crotonase-like_dom_sf"/>
</dbReference>
<dbReference type="InterPro" id="IPR018376">
    <property type="entry name" value="Enoyl-CoA_hyd/isom_CS"/>
</dbReference>
<dbReference type="InterPro" id="IPR001753">
    <property type="entry name" value="Enoyl-CoA_hydra/iso"/>
</dbReference>
<dbReference type="InterPro" id="IPR050136">
    <property type="entry name" value="FA_oxidation_alpha_subunit"/>
</dbReference>
<dbReference type="InterPro" id="IPR012799">
    <property type="entry name" value="FadB"/>
</dbReference>
<dbReference type="InterPro" id="IPR036291">
    <property type="entry name" value="NAD(P)-bd_dom_sf"/>
</dbReference>
<dbReference type="NCBIfam" id="TIGR02437">
    <property type="entry name" value="FadB"/>
    <property type="match status" value="1"/>
</dbReference>
<dbReference type="NCBIfam" id="NF008727">
    <property type="entry name" value="PRK11730.1"/>
    <property type="match status" value="1"/>
</dbReference>
<dbReference type="PANTHER" id="PTHR43612">
    <property type="entry name" value="TRIFUNCTIONAL ENZYME SUBUNIT ALPHA"/>
    <property type="match status" value="1"/>
</dbReference>
<dbReference type="PANTHER" id="PTHR43612:SF3">
    <property type="entry name" value="TRIFUNCTIONAL ENZYME SUBUNIT ALPHA, MITOCHONDRIAL"/>
    <property type="match status" value="1"/>
</dbReference>
<dbReference type="Pfam" id="PF00725">
    <property type="entry name" value="3HCDH"/>
    <property type="match status" value="1"/>
</dbReference>
<dbReference type="Pfam" id="PF02737">
    <property type="entry name" value="3HCDH_N"/>
    <property type="match status" value="1"/>
</dbReference>
<dbReference type="Pfam" id="PF00378">
    <property type="entry name" value="ECH_1"/>
    <property type="match status" value="1"/>
</dbReference>
<dbReference type="SUPFAM" id="SSF48179">
    <property type="entry name" value="6-phosphogluconate dehydrogenase C-terminal domain-like"/>
    <property type="match status" value="2"/>
</dbReference>
<dbReference type="SUPFAM" id="SSF52096">
    <property type="entry name" value="ClpP/crotonase"/>
    <property type="match status" value="1"/>
</dbReference>
<dbReference type="SUPFAM" id="SSF51735">
    <property type="entry name" value="NAD(P)-binding Rossmann-fold domains"/>
    <property type="match status" value="1"/>
</dbReference>
<dbReference type="PROSITE" id="PS00067">
    <property type="entry name" value="3HCDH"/>
    <property type="match status" value="1"/>
</dbReference>
<dbReference type="PROSITE" id="PS00166">
    <property type="entry name" value="ENOYL_COA_HYDRATASE"/>
    <property type="match status" value="1"/>
</dbReference>
<name>FADB_PSEAE</name>
<protein>
    <recommendedName>
        <fullName evidence="1">Fatty acid oxidation complex subunit alpha</fullName>
    </recommendedName>
    <domain>
        <recommendedName>
            <fullName evidence="1">Enoyl-CoA hydratase/Delta(3)-cis-Delta(2)-trans-enoyl-CoA isomerase/3-hydroxybutyryl-CoA epimerase</fullName>
            <ecNumber evidence="1">4.2.1.17</ecNumber>
            <ecNumber evidence="1">5.1.2.3</ecNumber>
            <ecNumber evidence="1">5.3.3.8</ecNumber>
        </recommendedName>
    </domain>
    <domain>
        <recommendedName>
            <fullName evidence="1">3-hydroxyacyl-CoA dehydrogenase</fullName>
            <ecNumber evidence="1">1.1.1.35</ecNumber>
        </recommendedName>
    </domain>
</protein>
<keyword id="KW-0276">Fatty acid metabolism</keyword>
<keyword id="KW-0413">Isomerase</keyword>
<keyword id="KW-0442">Lipid degradation</keyword>
<keyword id="KW-0443">Lipid metabolism</keyword>
<keyword id="KW-0456">Lyase</keyword>
<keyword id="KW-0511">Multifunctional enzyme</keyword>
<keyword id="KW-0520">NAD</keyword>
<keyword id="KW-0560">Oxidoreductase</keyword>
<keyword id="KW-1185">Reference proteome</keyword>
<accession>Q9HZJ2</accession>